<dbReference type="EC" id="4.1.1.65" evidence="1"/>
<dbReference type="EMBL" id="AE016879">
    <property type="protein sequence ID" value="AAP28273.1"/>
    <property type="molecule type" value="Genomic_DNA"/>
</dbReference>
<dbReference type="EMBL" id="AE017334">
    <property type="protein sequence ID" value="AAT33685.2"/>
    <property type="molecule type" value="Genomic_DNA"/>
</dbReference>
<dbReference type="EMBL" id="AE017225">
    <property type="protein sequence ID" value="AAT56534.1"/>
    <property type="molecule type" value="Genomic_DNA"/>
</dbReference>
<dbReference type="RefSeq" id="NP_846787.1">
    <property type="nucleotide sequence ID" value="NC_003997.3"/>
</dbReference>
<dbReference type="RefSeq" id="WP_001255013.1">
    <property type="nucleotide sequence ID" value="NZ_WXXJ01000027.1"/>
</dbReference>
<dbReference type="RefSeq" id="YP_030483.1">
    <property type="nucleotide sequence ID" value="NC_005945.1"/>
</dbReference>
<dbReference type="SMR" id="Q81LP7"/>
<dbReference type="STRING" id="261594.GBAA_4565"/>
<dbReference type="DNASU" id="1088333"/>
<dbReference type="GeneID" id="45024215"/>
<dbReference type="KEGG" id="ban:BA_4565"/>
<dbReference type="KEGG" id="bar:GBAA_4565"/>
<dbReference type="KEGG" id="bat:BAS4235"/>
<dbReference type="PATRIC" id="fig|198094.11.peg.4531"/>
<dbReference type="eggNOG" id="COG0688">
    <property type="taxonomic scope" value="Bacteria"/>
</dbReference>
<dbReference type="HOGENOM" id="CLU_029061_4_0_9"/>
<dbReference type="OMA" id="KREWSIF"/>
<dbReference type="OrthoDB" id="9802030at2"/>
<dbReference type="UniPathway" id="UPA00558">
    <property type="reaction ID" value="UER00616"/>
</dbReference>
<dbReference type="Proteomes" id="UP000000427">
    <property type="component" value="Chromosome"/>
</dbReference>
<dbReference type="Proteomes" id="UP000000594">
    <property type="component" value="Chromosome"/>
</dbReference>
<dbReference type="GO" id="GO:0005886">
    <property type="term" value="C:plasma membrane"/>
    <property type="evidence" value="ECO:0007669"/>
    <property type="project" value="UniProtKB-SubCell"/>
</dbReference>
<dbReference type="GO" id="GO:0004609">
    <property type="term" value="F:phosphatidylserine decarboxylase activity"/>
    <property type="evidence" value="ECO:0007669"/>
    <property type="project" value="UniProtKB-UniRule"/>
</dbReference>
<dbReference type="GO" id="GO:0006646">
    <property type="term" value="P:phosphatidylethanolamine biosynthetic process"/>
    <property type="evidence" value="ECO:0007669"/>
    <property type="project" value="UniProtKB-UniRule"/>
</dbReference>
<dbReference type="HAMAP" id="MF_00662">
    <property type="entry name" value="PS_decarb_PSD_B_type1"/>
    <property type="match status" value="1"/>
</dbReference>
<dbReference type="InterPro" id="IPR003817">
    <property type="entry name" value="PS_Dcarbxylase"/>
</dbReference>
<dbReference type="InterPro" id="IPR033177">
    <property type="entry name" value="PSD-B"/>
</dbReference>
<dbReference type="InterPro" id="IPR033178">
    <property type="entry name" value="PSD_type1_pro"/>
</dbReference>
<dbReference type="NCBIfam" id="NF002853">
    <property type="entry name" value="PRK03140.1"/>
    <property type="match status" value="1"/>
</dbReference>
<dbReference type="NCBIfam" id="TIGR00163">
    <property type="entry name" value="PS_decarb"/>
    <property type="match status" value="1"/>
</dbReference>
<dbReference type="PANTHER" id="PTHR10067">
    <property type="entry name" value="PHOSPHATIDYLSERINE DECARBOXYLASE"/>
    <property type="match status" value="1"/>
</dbReference>
<dbReference type="PANTHER" id="PTHR10067:SF6">
    <property type="entry name" value="PHOSPHATIDYLSERINE DECARBOXYLASE PROENZYME, MITOCHONDRIAL"/>
    <property type="match status" value="1"/>
</dbReference>
<dbReference type="Pfam" id="PF02666">
    <property type="entry name" value="PS_Dcarbxylase"/>
    <property type="match status" value="1"/>
</dbReference>
<keyword id="KW-1003">Cell membrane</keyword>
<keyword id="KW-0210">Decarboxylase</keyword>
<keyword id="KW-0444">Lipid biosynthesis</keyword>
<keyword id="KW-0443">Lipid metabolism</keyword>
<keyword id="KW-0456">Lyase</keyword>
<keyword id="KW-0472">Membrane</keyword>
<keyword id="KW-0594">Phospholipid biosynthesis</keyword>
<keyword id="KW-1208">Phospholipid metabolism</keyword>
<keyword id="KW-0670">Pyruvate</keyword>
<keyword id="KW-1185">Reference proteome</keyword>
<keyword id="KW-0865">Zymogen</keyword>
<organism>
    <name type="scientific">Bacillus anthracis</name>
    <dbReference type="NCBI Taxonomy" id="1392"/>
    <lineage>
        <taxon>Bacteria</taxon>
        <taxon>Bacillati</taxon>
        <taxon>Bacillota</taxon>
        <taxon>Bacilli</taxon>
        <taxon>Bacillales</taxon>
        <taxon>Bacillaceae</taxon>
        <taxon>Bacillus</taxon>
        <taxon>Bacillus cereus group</taxon>
    </lineage>
</organism>
<comment type="function">
    <text evidence="1">Catalyzes the formation of phosphatidylethanolamine (PtdEtn) from phosphatidylserine (PtdSer).</text>
</comment>
<comment type="catalytic activity">
    <reaction evidence="1">
        <text>a 1,2-diacyl-sn-glycero-3-phospho-L-serine + H(+) = a 1,2-diacyl-sn-glycero-3-phosphoethanolamine + CO2</text>
        <dbReference type="Rhea" id="RHEA:20828"/>
        <dbReference type="ChEBI" id="CHEBI:15378"/>
        <dbReference type="ChEBI" id="CHEBI:16526"/>
        <dbReference type="ChEBI" id="CHEBI:57262"/>
        <dbReference type="ChEBI" id="CHEBI:64612"/>
        <dbReference type="EC" id="4.1.1.65"/>
    </reaction>
</comment>
<comment type="cofactor">
    <cofactor evidence="1">
        <name>pyruvate</name>
        <dbReference type="ChEBI" id="CHEBI:15361"/>
    </cofactor>
    <text evidence="1">Binds 1 pyruvoyl group covalently per subunit.</text>
</comment>
<comment type="pathway">
    <text evidence="1">Phospholipid metabolism; phosphatidylethanolamine biosynthesis; phosphatidylethanolamine from CDP-diacylglycerol: step 2/2.</text>
</comment>
<comment type="subunit">
    <text evidence="1">Heterodimer of a large membrane-associated beta subunit and a small pyruvoyl-containing alpha subunit.</text>
</comment>
<comment type="subcellular location">
    <subcellularLocation>
        <location evidence="1">Cell membrane</location>
        <topology evidence="1">Peripheral membrane protein</topology>
    </subcellularLocation>
</comment>
<comment type="PTM">
    <text evidence="1">Is synthesized initially as an inactive proenzyme. Formation of the active enzyme involves a self-maturation process in which the active site pyruvoyl group is generated from an internal serine residue via an autocatalytic post-translational modification. Two non-identical subunits are generated from the proenzyme in this reaction, and the pyruvate is formed at the N-terminus of the alpha chain, which is derived from the carboxyl end of the proenzyme. The autoendoproteolytic cleavage occurs by a canonical serine protease mechanism, in which the side chain hydroxyl group of the serine supplies its oxygen atom to form the C-terminus of the beta chain, while the remainder of the serine residue undergoes an oxidative deamination to produce ammonia and the pyruvoyl prosthetic group on the alpha chain. During this reaction, the Ser that is part of the protease active site of the proenzyme becomes the pyruvoyl prosthetic group, which constitutes an essential element of the active site of the mature decarboxylase.</text>
</comment>
<comment type="similarity">
    <text evidence="1">Belongs to the phosphatidylserine decarboxylase family. PSD-B subfamily. Prokaryotic type I sub-subfamily.</text>
</comment>
<gene>
    <name evidence="1" type="primary">psd</name>
    <name type="ordered locus">BA_4565</name>
    <name type="ordered locus">GBAA_4565</name>
    <name type="ordered locus">BAS4235</name>
</gene>
<name>PSD_BACAN</name>
<accession>Q81LP7</accession>
<accession>Q6HT55</accession>
<accession>Q6KME3</accession>
<protein>
    <recommendedName>
        <fullName evidence="1">Phosphatidylserine decarboxylase proenzyme</fullName>
        <ecNumber evidence="1">4.1.1.65</ecNumber>
    </recommendedName>
    <component>
        <recommendedName>
            <fullName evidence="1">Phosphatidylserine decarboxylase alpha chain</fullName>
        </recommendedName>
    </component>
    <component>
        <recommendedName>
            <fullName evidence="1">Phosphatidylserine decarboxylase beta chain</fullName>
        </recommendedName>
    </component>
</protein>
<evidence type="ECO:0000255" key="1">
    <source>
        <dbReference type="HAMAP-Rule" id="MF_00662"/>
    </source>
</evidence>
<reference key="1">
    <citation type="journal article" date="2003" name="Nature">
        <title>The genome sequence of Bacillus anthracis Ames and comparison to closely related bacteria.</title>
        <authorList>
            <person name="Read T.D."/>
            <person name="Peterson S.N."/>
            <person name="Tourasse N.J."/>
            <person name="Baillie L.W."/>
            <person name="Paulsen I.T."/>
            <person name="Nelson K.E."/>
            <person name="Tettelin H."/>
            <person name="Fouts D.E."/>
            <person name="Eisen J.A."/>
            <person name="Gill S.R."/>
            <person name="Holtzapple E.K."/>
            <person name="Okstad O.A."/>
            <person name="Helgason E."/>
            <person name="Rilstone J."/>
            <person name="Wu M."/>
            <person name="Kolonay J.F."/>
            <person name="Beanan M.J."/>
            <person name="Dodson R.J."/>
            <person name="Brinkac L.M."/>
            <person name="Gwinn M.L."/>
            <person name="DeBoy R.T."/>
            <person name="Madpu R."/>
            <person name="Daugherty S.C."/>
            <person name="Durkin A.S."/>
            <person name="Haft D.H."/>
            <person name="Nelson W.C."/>
            <person name="Peterson J.D."/>
            <person name="Pop M."/>
            <person name="Khouri H.M."/>
            <person name="Radune D."/>
            <person name="Benton J.L."/>
            <person name="Mahamoud Y."/>
            <person name="Jiang L."/>
            <person name="Hance I.R."/>
            <person name="Weidman J.F."/>
            <person name="Berry K.J."/>
            <person name="Plaut R.D."/>
            <person name="Wolf A.M."/>
            <person name="Watkins K.L."/>
            <person name="Nierman W.C."/>
            <person name="Hazen A."/>
            <person name="Cline R.T."/>
            <person name="Redmond C."/>
            <person name="Thwaite J.E."/>
            <person name="White O."/>
            <person name="Salzberg S.L."/>
            <person name="Thomason B."/>
            <person name="Friedlander A.M."/>
            <person name="Koehler T.M."/>
            <person name="Hanna P.C."/>
            <person name="Kolstoe A.-B."/>
            <person name="Fraser C.M."/>
        </authorList>
    </citation>
    <scope>NUCLEOTIDE SEQUENCE [LARGE SCALE GENOMIC DNA]</scope>
    <source>
        <strain>Ames / isolate Porton</strain>
    </source>
</reference>
<reference key="2">
    <citation type="journal article" date="2009" name="J. Bacteriol.">
        <title>The complete genome sequence of Bacillus anthracis Ames 'Ancestor'.</title>
        <authorList>
            <person name="Ravel J."/>
            <person name="Jiang L."/>
            <person name="Stanley S.T."/>
            <person name="Wilson M.R."/>
            <person name="Decker R.S."/>
            <person name="Read T.D."/>
            <person name="Worsham P."/>
            <person name="Keim P.S."/>
            <person name="Salzberg S.L."/>
            <person name="Fraser-Liggett C.M."/>
            <person name="Rasko D.A."/>
        </authorList>
    </citation>
    <scope>NUCLEOTIDE SEQUENCE [LARGE SCALE GENOMIC DNA]</scope>
    <source>
        <strain>Ames ancestor</strain>
    </source>
</reference>
<reference key="3">
    <citation type="submission" date="2004-01" db="EMBL/GenBank/DDBJ databases">
        <title>Complete genome sequence of Bacillus anthracis Sterne.</title>
        <authorList>
            <person name="Brettin T.S."/>
            <person name="Bruce D."/>
            <person name="Challacombe J.F."/>
            <person name="Gilna P."/>
            <person name="Han C."/>
            <person name="Hill K."/>
            <person name="Hitchcock P."/>
            <person name="Jackson P."/>
            <person name="Keim P."/>
            <person name="Longmire J."/>
            <person name="Lucas S."/>
            <person name="Okinaka R."/>
            <person name="Richardson P."/>
            <person name="Rubin E."/>
            <person name="Tice H."/>
        </authorList>
    </citation>
    <scope>NUCLEOTIDE SEQUENCE [LARGE SCALE GENOMIC DNA]</scope>
    <source>
        <strain>Sterne</strain>
    </source>
</reference>
<sequence>MRRTLYRLMIELTNGRFTSYTLRKFAQSRLSSIIIPSYAKVFQINQDEMEKGLKEYRTLHELFTRKLKEGKRSIDTDASSIVSPVDGVFADHGPIEDTKTFDIKGKRYSIVDMLGNEERAQRYAGGTYMVIYLSPSHYHRIHSPLSGSVTERFVLGRKSYPVNAAGMEYGKEPLSKNYRSVTEVNSDGEHMALVKVGAMFVNSIELLHERDTVQKGEEMAYFTFGSTVVLLFEKDMIEVVQELKSGQELRLGEKIATRLAHK</sequence>
<feature type="chain" id="PRO_0000029619" description="Phosphatidylserine decarboxylase beta chain" evidence="1">
    <location>
        <begin position="1"/>
        <end position="225"/>
    </location>
</feature>
<feature type="chain" id="PRO_0000029620" description="Phosphatidylserine decarboxylase alpha chain" evidence="1">
    <location>
        <begin position="226"/>
        <end position="262"/>
    </location>
</feature>
<feature type="active site" description="Charge relay system; for autoendoproteolytic cleavage activity" evidence="1">
    <location>
        <position position="86"/>
    </location>
</feature>
<feature type="active site" description="Charge relay system; for autoendoproteolytic cleavage activity" evidence="1">
    <location>
        <position position="142"/>
    </location>
</feature>
<feature type="active site" description="Charge relay system; for autoendoproteolytic cleavage activity" evidence="1">
    <location>
        <position position="226"/>
    </location>
</feature>
<feature type="active site" description="Schiff-base intermediate with substrate; via pyruvic acid; for decarboxylase activity" evidence="1">
    <location>
        <position position="226"/>
    </location>
</feature>
<feature type="site" description="Cleavage (non-hydrolytic); by autocatalysis" evidence="1">
    <location>
        <begin position="225"/>
        <end position="226"/>
    </location>
</feature>
<feature type="modified residue" description="Pyruvic acid (Ser); by autocatalysis" evidence="1">
    <location>
        <position position="226"/>
    </location>
</feature>
<proteinExistence type="inferred from homology"/>